<sequence length="182" mass="21003">MEKFKEIMDANQMRRALVRISHEILEKNKGVENLCLVGIQRRGVTLAKRIQENIEMIEGVKLPLGILDITFYRDDLSLLSEHPTVNSTRIDFDINNKKIVLVDDVIFTGRTVRAAIEALMDMGRPKMIQFAVLIDRGHRELPIRADYVGKNVPTSRKEIVHVLVDEFDNDNRVIIEQLDREI</sequence>
<comment type="function">
    <text evidence="1">Regulates transcriptional attenuation of the pyrimidine nucleotide (pyr) operon by binding in a uridine-dependent manner to specific sites on pyr mRNA. This disrupts an antiterminator hairpin in the RNA and favors formation of a downstream transcription terminator, leading to a reduced expression of downstream genes.</text>
</comment>
<comment type="function">
    <text evidence="1">Also displays a weak uracil phosphoribosyltransferase activity which is not physiologically significant.</text>
</comment>
<comment type="catalytic activity">
    <reaction evidence="1">
        <text>UMP + diphosphate = 5-phospho-alpha-D-ribose 1-diphosphate + uracil</text>
        <dbReference type="Rhea" id="RHEA:13017"/>
        <dbReference type="ChEBI" id="CHEBI:17568"/>
        <dbReference type="ChEBI" id="CHEBI:33019"/>
        <dbReference type="ChEBI" id="CHEBI:57865"/>
        <dbReference type="ChEBI" id="CHEBI:58017"/>
        <dbReference type="EC" id="2.4.2.9"/>
    </reaction>
</comment>
<comment type="subunit">
    <text evidence="1">Homodimer and homohexamer; in equilibrium.</text>
</comment>
<comment type="similarity">
    <text evidence="1">Belongs to the purine/pyrimidine phosphoribosyltransferase family. PyrR subfamily.</text>
</comment>
<organism>
    <name type="scientific">Caldicellulosiruptor saccharolyticus (strain ATCC 43494 / DSM 8903 / Tp8T 6331)</name>
    <dbReference type="NCBI Taxonomy" id="351627"/>
    <lineage>
        <taxon>Bacteria</taxon>
        <taxon>Bacillati</taxon>
        <taxon>Bacillota</taxon>
        <taxon>Bacillota incertae sedis</taxon>
        <taxon>Caldicellulosiruptorales</taxon>
        <taxon>Caldicellulosiruptoraceae</taxon>
        <taxon>Caldicellulosiruptor</taxon>
    </lineage>
</organism>
<dbReference type="EC" id="2.4.2.9" evidence="1"/>
<dbReference type="EMBL" id="CP000679">
    <property type="protein sequence ID" value="ABP67514.1"/>
    <property type="molecule type" value="Genomic_DNA"/>
</dbReference>
<dbReference type="RefSeq" id="WP_011917450.1">
    <property type="nucleotide sequence ID" value="NC_009437.1"/>
</dbReference>
<dbReference type="SMR" id="A4XKS9"/>
<dbReference type="STRING" id="351627.Csac_1929"/>
<dbReference type="KEGG" id="csc:Csac_1929"/>
<dbReference type="eggNOG" id="COG2065">
    <property type="taxonomic scope" value="Bacteria"/>
</dbReference>
<dbReference type="HOGENOM" id="CLU_094234_2_1_9"/>
<dbReference type="OrthoDB" id="9802227at2"/>
<dbReference type="Proteomes" id="UP000000256">
    <property type="component" value="Chromosome"/>
</dbReference>
<dbReference type="GO" id="GO:0003723">
    <property type="term" value="F:RNA binding"/>
    <property type="evidence" value="ECO:0007669"/>
    <property type="project" value="UniProtKB-UniRule"/>
</dbReference>
<dbReference type="GO" id="GO:0004845">
    <property type="term" value="F:uracil phosphoribosyltransferase activity"/>
    <property type="evidence" value="ECO:0007669"/>
    <property type="project" value="UniProtKB-UniRule"/>
</dbReference>
<dbReference type="GO" id="GO:0006353">
    <property type="term" value="P:DNA-templated transcription termination"/>
    <property type="evidence" value="ECO:0007669"/>
    <property type="project" value="UniProtKB-UniRule"/>
</dbReference>
<dbReference type="CDD" id="cd06223">
    <property type="entry name" value="PRTases_typeI"/>
    <property type="match status" value="1"/>
</dbReference>
<dbReference type="FunFam" id="3.40.50.2020:FF:000020">
    <property type="entry name" value="Bifunctional protein PyrR"/>
    <property type="match status" value="1"/>
</dbReference>
<dbReference type="Gene3D" id="3.40.50.2020">
    <property type="match status" value="1"/>
</dbReference>
<dbReference type="HAMAP" id="MF_01219">
    <property type="entry name" value="PyrR"/>
    <property type="match status" value="1"/>
</dbReference>
<dbReference type="InterPro" id="IPR000836">
    <property type="entry name" value="PRibTrfase_dom"/>
</dbReference>
<dbReference type="InterPro" id="IPR029057">
    <property type="entry name" value="PRTase-like"/>
</dbReference>
<dbReference type="InterPro" id="IPR023050">
    <property type="entry name" value="PyrR"/>
</dbReference>
<dbReference type="InterPro" id="IPR050137">
    <property type="entry name" value="PyrR_bifunctional"/>
</dbReference>
<dbReference type="NCBIfam" id="NF003545">
    <property type="entry name" value="PRK05205.1-1"/>
    <property type="match status" value="1"/>
</dbReference>
<dbReference type="NCBIfam" id="NF003548">
    <property type="entry name" value="PRK05205.1-4"/>
    <property type="match status" value="1"/>
</dbReference>
<dbReference type="NCBIfam" id="NF003549">
    <property type="entry name" value="PRK05205.1-5"/>
    <property type="match status" value="1"/>
</dbReference>
<dbReference type="PANTHER" id="PTHR11608">
    <property type="entry name" value="BIFUNCTIONAL PROTEIN PYRR"/>
    <property type="match status" value="1"/>
</dbReference>
<dbReference type="PANTHER" id="PTHR11608:SF0">
    <property type="entry name" value="BIFUNCTIONAL PROTEIN PYRR"/>
    <property type="match status" value="1"/>
</dbReference>
<dbReference type="Pfam" id="PF00156">
    <property type="entry name" value="Pribosyltran"/>
    <property type="match status" value="1"/>
</dbReference>
<dbReference type="SUPFAM" id="SSF53271">
    <property type="entry name" value="PRTase-like"/>
    <property type="match status" value="1"/>
</dbReference>
<protein>
    <recommendedName>
        <fullName evidence="1">Bifunctional protein PyrR</fullName>
    </recommendedName>
    <domain>
        <recommendedName>
            <fullName evidence="1">Pyrimidine operon regulatory protein</fullName>
        </recommendedName>
    </domain>
    <domain>
        <recommendedName>
            <fullName evidence="1">Uracil phosphoribosyltransferase</fullName>
            <shortName evidence="1">UPRTase</shortName>
            <ecNumber evidence="1">2.4.2.9</ecNumber>
        </recommendedName>
    </domain>
</protein>
<feature type="chain" id="PRO_1000053826" description="Bifunctional protein PyrR">
    <location>
        <begin position="1"/>
        <end position="182"/>
    </location>
</feature>
<feature type="short sequence motif" description="PRPP-binding" evidence="1">
    <location>
        <begin position="99"/>
        <end position="111"/>
    </location>
</feature>
<reference key="1">
    <citation type="submission" date="2007-04" db="EMBL/GenBank/DDBJ databases">
        <title>Genome sequence of the thermophilic hydrogen-producing bacterium Caldicellulosiruptor saccharolyticus DSM 8903.</title>
        <authorList>
            <person name="Copeland A."/>
            <person name="Lucas S."/>
            <person name="Lapidus A."/>
            <person name="Barry K."/>
            <person name="Detter J.C."/>
            <person name="Glavina del Rio T."/>
            <person name="Hammon N."/>
            <person name="Israni S."/>
            <person name="Dalin E."/>
            <person name="Tice H."/>
            <person name="Pitluck S."/>
            <person name="Kiss H."/>
            <person name="Brettin T."/>
            <person name="Bruce D."/>
            <person name="Han C."/>
            <person name="Schmutz J."/>
            <person name="Larimer F."/>
            <person name="Land M."/>
            <person name="Hauser L."/>
            <person name="Kyrpides N."/>
            <person name="Lykidis A."/>
            <person name="van de Werken H.J.G."/>
            <person name="Verhaart M.R.A."/>
            <person name="VanFossen A.L."/>
            <person name="Lewis D.L."/>
            <person name="Nichols J.D."/>
            <person name="Goorissen H.P."/>
            <person name="van Niel E.W.J."/>
            <person name="Stams F.J.M."/>
            <person name="Willquist K.U."/>
            <person name="Ward D.E."/>
            <person name="van der Oost J."/>
            <person name="Kelly R.M."/>
            <person name="Kengen S.M.W."/>
            <person name="Richardson P."/>
        </authorList>
    </citation>
    <scope>NUCLEOTIDE SEQUENCE [LARGE SCALE GENOMIC DNA]</scope>
    <source>
        <strain>ATCC 43494 / DSM 8903 / Tp8T 6331</strain>
    </source>
</reference>
<evidence type="ECO:0000255" key="1">
    <source>
        <dbReference type="HAMAP-Rule" id="MF_01219"/>
    </source>
</evidence>
<proteinExistence type="inferred from homology"/>
<accession>A4XKS9</accession>
<gene>
    <name evidence="1" type="primary">pyrR</name>
    <name type="ordered locus">Csac_1929</name>
</gene>
<keyword id="KW-0328">Glycosyltransferase</keyword>
<keyword id="KW-0694">RNA-binding</keyword>
<keyword id="KW-0804">Transcription</keyword>
<keyword id="KW-0805">Transcription regulation</keyword>
<keyword id="KW-0806">Transcription termination</keyword>
<keyword id="KW-0808">Transferase</keyword>
<name>PYRR_CALS8</name>